<proteinExistence type="inferred from homology"/>
<sequence>MGGISIWQLLIIAVIVVLLFGTNKLRTLGSDLGASVKGFKKAMGDENQKETNNAEKTTNDADFDTKNLAQKTSTEEKSTTESKNKEQV</sequence>
<name>TATA_PROMH</name>
<gene>
    <name evidence="1" type="primary">tatA</name>
    <name type="ordered locus">PMI3539</name>
</gene>
<dbReference type="EMBL" id="AM942759">
    <property type="protein sequence ID" value="CAR46930.1"/>
    <property type="molecule type" value="Genomic_DNA"/>
</dbReference>
<dbReference type="RefSeq" id="WP_004246118.1">
    <property type="nucleotide sequence ID" value="NC_010554.1"/>
</dbReference>
<dbReference type="SMR" id="B4EWD2"/>
<dbReference type="EnsemblBacteria" id="CAR46930">
    <property type="protein sequence ID" value="CAR46930"/>
    <property type="gene ID" value="PMI3539"/>
</dbReference>
<dbReference type="GeneID" id="6802650"/>
<dbReference type="KEGG" id="pmr:PMI3539"/>
<dbReference type="eggNOG" id="COG1826">
    <property type="taxonomic scope" value="Bacteria"/>
</dbReference>
<dbReference type="HOGENOM" id="CLU_086034_5_1_6"/>
<dbReference type="Proteomes" id="UP000008319">
    <property type="component" value="Chromosome"/>
</dbReference>
<dbReference type="GO" id="GO:0033281">
    <property type="term" value="C:TAT protein transport complex"/>
    <property type="evidence" value="ECO:0007669"/>
    <property type="project" value="UniProtKB-UniRule"/>
</dbReference>
<dbReference type="GO" id="GO:0008320">
    <property type="term" value="F:protein transmembrane transporter activity"/>
    <property type="evidence" value="ECO:0007669"/>
    <property type="project" value="UniProtKB-UniRule"/>
</dbReference>
<dbReference type="GO" id="GO:0043953">
    <property type="term" value="P:protein transport by the Tat complex"/>
    <property type="evidence" value="ECO:0007669"/>
    <property type="project" value="UniProtKB-UniRule"/>
</dbReference>
<dbReference type="FunFam" id="1.20.5.3310:FF:000001">
    <property type="entry name" value="Probable Sec-independent protein translocase protein TatE"/>
    <property type="match status" value="1"/>
</dbReference>
<dbReference type="Gene3D" id="1.20.5.3310">
    <property type="match status" value="1"/>
</dbReference>
<dbReference type="HAMAP" id="MF_00236">
    <property type="entry name" value="TatA_E"/>
    <property type="match status" value="1"/>
</dbReference>
<dbReference type="InterPro" id="IPR003369">
    <property type="entry name" value="TatA/B/E"/>
</dbReference>
<dbReference type="InterPro" id="IPR006312">
    <property type="entry name" value="TatA/E"/>
</dbReference>
<dbReference type="NCBIfam" id="NF002448">
    <property type="entry name" value="PRK01614.1"/>
    <property type="match status" value="1"/>
</dbReference>
<dbReference type="NCBIfam" id="TIGR01411">
    <property type="entry name" value="tatAE"/>
    <property type="match status" value="1"/>
</dbReference>
<dbReference type="PANTHER" id="PTHR42982">
    <property type="entry name" value="SEC-INDEPENDENT PROTEIN TRANSLOCASE PROTEIN TATA"/>
    <property type="match status" value="1"/>
</dbReference>
<dbReference type="PANTHER" id="PTHR42982:SF1">
    <property type="entry name" value="SEC-INDEPENDENT PROTEIN TRANSLOCASE PROTEIN TATA"/>
    <property type="match status" value="1"/>
</dbReference>
<dbReference type="Pfam" id="PF02416">
    <property type="entry name" value="TatA_B_E"/>
    <property type="match status" value="1"/>
</dbReference>
<reference key="1">
    <citation type="journal article" date="2008" name="J. Bacteriol.">
        <title>Complete genome sequence of uropathogenic Proteus mirabilis, a master of both adherence and motility.</title>
        <authorList>
            <person name="Pearson M.M."/>
            <person name="Sebaihia M."/>
            <person name="Churcher C."/>
            <person name="Quail M.A."/>
            <person name="Seshasayee A.S."/>
            <person name="Luscombe N.M."/>
            <person name="Abdellah Z."/>
            <person name="Arrosmith C."/>
            <person name="Atkin B."/>
            <person name="Chillingworth T."/>
            <person name="Hauser H."/>
            <person name="Jagels K."/>
            <person name="Moule S."/>
            <person name="Mungall K."/>
            <person name="Norbertczak H."/>
            <person name="Rabbinowitsch E."/>
            <person name="Walker D."/>
            <person name="Whithead S."/>
            <person name="Thomson N.R."/>
            <person name="Rather P.N."/>
            <person name="Parkhill J."/>
            <person name="Mobley H.L.T."/>
        </authorList>
    </citation>
    <scope>NUCLEOTIDE SEQUENCE [LARGE SCALE GENOMIC DNA]</scope>
    <source>
        <strain>HI4320</strain>
    </source>
</reference>
<comment type="function">
    <text evidence="1">Part of the twin-arginine translocation (Tat) system that transports large folded proteins containing a characteristic twin-arginine motif in their signal peptide across membranes. TatA could form the protein-conducting channel of the Tat system.</text>
</comment>
<comment type="subunit">
    <text evidence="1">The Tat system comprises two distinct complexes: a TatABC complex, containing multiple copies of TatA, TatB and TatC subunits, and a separate TatA complex, containing only TatA subunits. Substrates initially bind to the TatABC complex, which probably triggers association of the separate TatA complex to form the active translocon.</text>
</comment>
<comment type="subcellular location">
    <subcellularLocation>
        <location evidence="1">Cell inner membrane</location>
        <topology evidence="1">Single-pass membrane protein</topology>
    </subcellularLocation>
</comment>
<comment type="similarity">
    <text evidence="1">Belongs to the TatA/E family.</text>
</comment>
<evidence type="ECO:0000255" key="1">
    <source>
        <dbReference type="HAMAP-Rule" id="MF_00236"/>
    </source>
</evidence>
<evidence type="ECO:0000256" key="2">
    <source>
        <dbReference type="SAM" id="MobiDB-lite"/>
    </source>
</evidence>
<accession>B4EWD2</accession>
<organism>
    <name type="scientific">Proteus mirabilis (strain HI4320)</name>
    <dbReference type="NCBI Taxonomy" id="529507"/>
    <lineage>
        <taxon>Bacteria</taxon>
        <taxon>Pseudomonadati</taxon>
        <taxon>Pseudomonadota</taxon>
        <taxon>Gammaproteobacteria</taxon>
        <taxon>Enterobacterales</taxon>
        <taxon>Morganellaceae</taxon>
        <taxon>Proteus</taxon>
    </lineage>
</organism>
<feature type="chain" id="PRO_1000197894" description="Sec-independent protein translocase protein TatA">
    <location>
        <begin position="1"/>
        <end position="88"/>
    </location>
</feature>
<feature type="transmembrane region" description="Helical" evidence="1">
    <location>
        <begin position="1"/>
        <end position="21"/>
    </location>
</feature>
<feature type="region of interest" description="Disordered" evidence="2">
    <location>
        <begin position="41"/>
        <end position="88"/>
    </location>
</feature>
<feature type="compositionally biased region" description="Basic and acidic residues" evidence="2">
    <location>
        <begin position="42"/>
        <end position="65"/>
    </location>
</feature>
<feature type="compositionally biased region" description="Basic and acidic residues" evidence="2">
    <location>
        <begin position="73"/>
        <end position="88"/>
    </location>
</feature>
<keyword id="KW-0997">Cell inner membrane</keyword>
<keyword id="KW-1003">Cell membrane</keyword>
<keyword id="KW-0472">Membrane</keyword>
<keyword id="KW-0653">Protein transport</keyword>
<keyword id="KW-1185">Reference proteome</keyword>
<keyword id="KW-0811">Translocation</keyword>
<keyword id="KW-0812">Transmembrane</keyword>
<keyword id="KW-1133">Transmembrane helix</keyword>
<keyword id="KW-0813">Transport</keyword>
<protein>
    <recommendedName>
        <fullName evidence="1">Sec-independent protein translocase protein TatA</fullName>
    </recommendedName>
</protein>